<accession>P66665</accession>
<accession>G0K802</accession>
<accession>Q8YG74</accession>
<name>RNC_BRUSU</name>
<reference key="1">
    <citation type="journal article" date="2002" name="Proc. Natl. Acad. Sci. U.S.A.">
        <title>The Brucella suis genome reveals fundamental similarities between animal and plant pathogens and symbionts.</title>
        <authorList>
            <person name="Paulsen I.T."/>
            <person name="Seshadri R."/>
            <person name="Nelson K.E."/>
            <person name="Eisen J.A."/>
            <person name="Heidelberg J.F."/>
            <person name="Read T.D."/>
            <person name="Dodson R.J."/>
            <person name="Umayam L.A."/>
            <person name="Brinkac L.M."/>
            <person name="Beanan M.J."/>
            <person name="Daugherty S.C."/>
            <person name="DeBoy R.T."/>
            <person name="Durkin A.S."/>
            <person name="Kolonay J.F."/>
            <person name="Madupu R."/>
            <person name="Nelson W.C."/>
            <person name="Ayodeji B."/>
            <person name="Kraul M."/>
            <person name="Shetty J."/>
            <person name="Malek J.A."/>
            <person name="Van Aken S.E."/>
            <person name="Riedmuller S."/>
            <person name="Tettelin H."/>
            <person name="Gill S.R."/>
            <person name="White O."/>
            <person name="Salzberg S.L."/>
            <person name="Hoover D.L."/>
            <person name="Lindler L.E."/>
            <person name="Halling S.M."/>
            <person name="Boyle S.M."/>
            <person name="Fraser C.M."/>
        </authorList>
    </citation>
    <scope>NUCLEOTIDE SEQUENCE [LARGE SCALE GENOMIC DNA]</scope>
    <source>
        <strain>1330</strain>
    </source>
</reference>
<reference key="2">
    <citation type="journal article" date="2011" name="J. Bacteriol.">
        <title>Revised genome sequence of Brucella suis 1330.</title>
        <authorList>
            <person name="Tae H."/>
            <person name="Shallom S."/>
            <person name="Settlage R."/>
            <person name="Preston D."/>
            <person name="Adams L.G."/>
            <person name="Garner H.R."/>
        </authorList>
    </citation>
    <scope>NUCLEOTIDE SEQUENCE [LARGE SCALE GENOMIC DNA]</scope>
    <source>
        <strain>1330</strain>
    </source>
</reference>
<proteinExistence type="inferred from homology"/>
<feature type="chain" id="PRO_0000180379" description="Ribonuclease 3">
    <location>
        <begin position="1"/>
        <end position="245"/>
    </location>
</feature>
<feature type="domain" description="RNase III" evidence="1">
    <location>
        <begin position="19"/>
        <end position="144"/>
    </location>
</feature>
<feature type="domain" description="DRBM" evidence="1">
    <location>
        <begin position="169"/>
        <end position="238"/>
    </location>
</feature>
<feature type="active site" evidence="1">
    <location>
        <position position="61"/>
    </location>
</feature>
<feature type="active site" evidence="1">
    <location>
        <position position="133"/>
    </location>
</feature>
<feature type="binding site" evidence="1">
    <location>
        <position position="57"/>
    </location>
    <ligand>
        <name>Mg(2+)</name>
        <dbReference type="ChEBI" id="CHEBI:18420"/>
    </ligand>
</feature>
<feature type="binding site" evidence="1">
    <location>
        <position position="130"/>
    </location>
    <ligand>
        <name>Mg(2+)</name>
        <dbReference type="ChEBI" id="CHEBI:18420"/>
    </ligand>
</feature>
<feature type="binding site" evidence="1">
    <location>
        <position position="133"/>
    </location>
    <ligand>
        <name>Mg(2+)</name>
        <dbReference type="ChEBI" id="CHEBI:18420"/>
    </ligand>
</feature>
<evidence type="ECO:0000255" key="1">
    <source>
        <dbReference type="HAMAP-Rule" id="MF_00104"/>
    </source>
</evidence>
<protein>
    <recommendedName>
        <fullName evidence="1">Ribonuclease 3</fullName>
        <ecNumber evidence="1">3.1.26.3</ecNumber>
    </recommendedName>
    <alternativeName>
        <fullName evidence="1">Ribonuclease III</fullName>
        <shortName evidence="1">RNase III</shortName>
    </alternativeName>
</protein>
<comment type="function">
    <text evidence="1">Digests double-stranded RNA. Involved in the processing of primary rRNA transcript to yield the immediate precursors to the large and small rRNAs (23S and 16S). Processes some mRNAs, and tRNAs when they are encoded in the rRNA operon. Processes pre-crRNA and tracrRNA of type II CRISPR loci if present in the organism.</text>
</comment>
<comment type="catalytic activity">
    <reaction evidence="1">
        <text>Endonucleolytic cleavage to 5'-phosphomonoester.</text>
        <dbReference type="EC" id="3.1.26.3"/>
    </reaction>
</comment>
<comment type="cofactor">
    <cofactor evidence="1">
        <name>Mg(2+)</name>
        <dbReference type="ChEBI" id="CHEBI:18420"/>
    </cofactor>
</comment>
<comment type="subunit">
    <text evidence="1">Homodimer.</text>
</comment>
<comment type="subcellular location">
    <subcellularLocation>
        <location evidence="1">Cytoplasm</location>
    </subcellularLocation>
</comment>
<comment type="similarity">
    <text evidence="1">Belongs to the ribonuclease III family.</text>
</comment>
<keyword id="KW-0963">Cytoplasm</keyword>
<keyword id="KW-0255">Endonuclease</keyword>
<keyword id="KW-0378">Hydrolase</keyword>
<keyword id="KW-0460">Magnesium</keyword>
<keyword id="KW-0479">Metal-binding</keyword>
<keyword id="KW-0507">mRNA processing</keyword>
<keyword id="KW-0540">Nuclease</keyword>
<keyword id="KW-0694">RNA-binding</keyword>
<keyword id="KW-0698">rRNA processing</keyword>
<keyword id="KW-0699">rRNA-binding</keyword>
<keyword id="KW-0819">tRNA processing</keyword>
<gene>
    <name evidence="1" type="primary">rnc</name>
    <name type="synonym">rncS</name>
    <name type="ordered locus">BS1330_I0657</name>
    <name type="ordered locus">BR0661</name>
</gene>
<sequence length="245" mass="27220">MNRTRPLPEIKMVSANKTASILEERTGHRFLNLKRLERALTHSSVQAPARANYERLEFLGDRVLGLTVAEMLFEAFPEASEGELSVRLNALVNAETCAAIADEIGLADLIHTGSDIKSLNDKRLLNVRADVVEALIATIYLDGGLEAARSFIQRYWKKRSLETGAARRDAKTELQEWAHQQGNVHPVYAILSRSGPDHDPLFLVEVTVKGFAPEKGEGRSKRIAEQSAAEAMLYREGVWKRDGSA</sequence>
<dbReference type="EC" id="3.1.26.3" evidence="1"/>
<dbReference type="EMBL" id="AE014291">
    <property type="protein sequence ID" value="AAN29590.1"/>
    <property type="molecule type" value="Genomic_DNA"/>
</dbReference>
<dbReference type="EMBL" id="CP002997">
    <property type="protein sequence ID" value="AEM18007.1"/>
    <property type="molecule type" value="Genomic_DNA"/>
</dbReference>
<dbReference type="SMR" id="P66665"/>
<dbReference type="KEGG" id="bms:BR0661"/>
<dbReference type="KEGG" id="bsi:BS1330_I0657"/>
<dbReference type="HOGENOM" id="CLU_000907_1_1_5"/>
<dbReference type="Proteomes" id="UP000007104">
    <property type="component" value="Chromosome I"/>
</dbReference>
<dbReference type="GO" id="GO:0005737">
    <property type="term" value="C:cytoplasm"/>
    <property type="evidence" value="ECO:0007669"/>
    <property type="project" value="UniProtKB-SubCell"/>
</dbReference>
<dbReference type="GO" id="GO:0003725">
    <property type="term" value="F:double-stranded RNA binding"/>
    <property type="evidence" value="ECO:0007669"/>
    <property type="project" value="TreeGrafter"/>
</dbReference>
<dbReference type="GO" id="GO:0046872">
    <property type="term" value="F:metal ion binding"/>
    <property type="evidence" value="ECO:0007669"/>
    <property type="project" value="UniProtKB-KW"/>
</dbReference>
<dbReference type="GO" id="GO:0004525">
    <property type="term" value="F:ribonuclease III activity"/>
    <property type="evidence" value="ECO:0007669"/>
    <property type="project" value="UniProtKB-UniRule"/>
</dbReference>
<dbReference type="GO" id="GO:0019843">
    <property type="term" value="F:rRNA binding"/>
    <property type="evidence" value="ECO:0007669"/>
    <property type="project" value="UniProtKB-KW"/>
</dbReference>
<dbReference type="GO" id="GO:0006397">
    <property type="term" value="P:mRNA processing"/>
    <property type="evidence" value="ECO:0007669"/>
    <property type="project" value="UniProtKB-UniRule"/>
</dbReference>
<dbReference type="GO" id="GO:0010468">
    <property type="term" value="P:regulation of gene expression"/>
    <property type="evidence" value="ECO:0007669"/>
    <property type="project" value="TreeGrafter"/>
</dbReference>
<dbReference type="GO" id="GO:0006364">
    <property type="term" value="P:rRNA processing"/>
    <property type="evidence" value="ECO:0007669"/>
    <property type="project" value="UniProtKB-UniRule"/>
</dbReference>
<dbReference type="GO" id="GO:0008033">
    <property type="term" value="P:tRNA processing"/>
    <property type="evidence" value="ECO:0007669"/>
    <property type="project" value="UniProtKB-KW"/>
</dbReference>
<dbReference type="CDD" id="cd10845">
    <property type="entry name" value="DSRM_RNAse_III_family"/>
    <property type="match status" value="1"/>
</dbReference>
<dbReference type="CDD" id="cd00593">
    <property type="entry name" value="RIBOc"/>
    <property type="match status" value="1"/>
</dbReference>
<dbReference type="FunFam" id="3.30.160.20:FF:000003">
    <property type="entry name" value="Ribonuclease 3"/>
    <property type="match status" value="1"/>
</dbReference>
<dbReference type="Gene3D" id="3.30.160.20">
    <property type="match status" value="1"/>
</dbReference>
<dbReference type="Gene3D" id="1.10.1520.10">
    <property type="entry name" value="Ribonuclease III domain"/>
    <property type="match status" value="1"/>
</dbReference>
<dbReference type="HAMAP" id="MF_00104">
    <property type="entry name" value="RNase_III"/>
    <property type="match status" value="1"/>
</dbReference>
<dbReference type="InterPro" id="IPR014720">
    <property type="entry name" value="dsRBD_dom"/>
</dbReference>
<dbReference type="InterPro" id="IPR011907">
    <property type="entry name" value="RNase_III"/>
</dbReference>
<dbReference type="InterPro" id="IPR000999">
    <property type="entry name" value="RNase_III_dom"/>
</dbReference>
<dbReference type="InterPro" id="IPR036389">
    <property type="entry name" value="RNase_III_sf"/>
</dbReference>
<dbReference type="NCBIfam" id="TIGR02191">
    <property type="entry name" value="RNaseIII"/>
    <property type="match status" value="1"/>
</dbReference>
<dbReference type="PANTHER" id="PTHR11207:SF0">
    <property type="entry name" value="RIBONUCLEASE 3"/>
    <property type="match status" value="1"/>
</dbReference>
<dbReference type="PANTHER" id="PTHR11207">
    <property type="entry name" value="RIBONUCLEASE III"/>
    <property type="match status" value="1"/>
</dbReference>
<dbReference type="Pfam" id="PF00035">
    <property type="entry name" value="dsrm"/>
    <property type="match status" value="1"/>
</dbReference>
<dbReference type="Pfam" id="PF14622">
    <property type="entry name" value="Ribonucleas_3_3"/>
    <property type="match status" value="1"/>
</dbReference>
<dbReference type="SMART" id="SM00358">
    <property type="entry name" value="DSRM"/>
    <property type="match status" value="1"/>
</dbReference>
<dbReference type="SMART" id="SM00535">
    <property type="entry name" value="RIBOc"/>
    <property type="match status" value="1"/>
</dbReference>
<dbReference type="SUPFAM" id="SSF54768">
    <property type="entry name" value="dsRNA-binding domain-like"/>
    <property type="match status" value="1"/>
</dbReference>
<dbReference type="SUPFAM" id="SSF69065">
    <property type="entry name" value="RNase III domain-like"/>
    <property type="match status" value="1"/>
</dbReference>
<dbReference type="PROSITE" id="PS50137">
    <property type="entry name" value="DS_RBD"/>
    <property type="match status" value="1"/>
</dbReference>
<dbReference type="PROSITE" id="PS00517">
    <property type="entry name" value="RNASE_3_1"/>
    <property type="match status" value="1"/>
</dbReference>
<dbReference type="PROSITE" id="PS50142">
    <property type="entry name" value="RNASE_3_2"/>
    <property type="match status" value="1"/>
</dbReference>
<organism>
    <name type="scientific">Brucella suis biovar 1 (strain 1330)</name>
    <dbReference type="NCBI Taxonomy" id="204722"/>
    <lineage>
        <taxon>Bacteria</taxon>
        <taxon>Pseudomonadati</taxon>
        <taxon>Pseudomonadota</taxon>
        <taxon>Alphaproteobacteria</taxon>
        <taxon>Hyphomicrobiales</taxon>
        <taxon>Brucellaceae</taxon>
        <taxon>Brucella/Ochrobactrum group</taxon>
        <taxon>Brucella</taxon>
    </lineage>
</organism>